<proteinExistence type="inferred from homology"/>
<protein>
    <recommendedName>
        <fullName evidence="1">Uracil phosphoribosyltransferase</fullName>
        <ecNumber evidence="1">2.4.2.9</ecNumber>
    </recommendedName>
    <alternativeName>
        <fullName evidence="1">UMP pyrophosphorylase</fullName>
    </alternativeName>
    <alternativeName>
        <fullName evidence="1">UPRTase</fullName>
    </alternativeName>
</protein>
<gene>
    <name evidence="1" type="primary">upp</name>
    <name type="ordered locus">str0355</name>
</gene>
<comment type="function">
    <text evidence="1">Catalyzes the conversion of uracil and 5-phospho-alpha-D-ribose 1-diphosphate (PRPP) to UMP and diphosphate.</text>
</comment>
<comment type="catalytic activity">
    <reaction evidence="1">
        <text>UMP + diphosphate = 5-phospho-alpha-D-ribose 1-diphosphate + uracil</text>
        <dbReference type="Rhea" id="RHEA:13017"/>
        <dbReference type="ChEBI" id="CHEBI:17568"/>
        <dbReference type="ChEBI" id="CHEBI:33019"/>
        <dbReference type="ChEBI" id="CHEBI:57865"/>
        <dbReference type="ChEBI" id="CHEBI:58017"/>
        <dbReference type="EC" id="2.4.2.9"/>
    </reaction>
</comment>
<comment type="cofactor">
    <cofactor evidence="1">
        <name>Mg(2+)</name>
        <dbReference type="ChEBI" id="CHEBI:18420"/>
    </cofactor>
    <text evidence="1">Binds 1 Mg(2+) ion per subunit. The magnesium is bound as Mg-PRPP.</text>
</comment>
<comment type="activity regulation">
    <text evidence="1">Allosterically activated by GTP.</text>
</comment>
<comment type="pathway">
    <text evidence="1">Pyrimidine metabolism; UMP biosynthesis via salvage pathway; UMP from uracil: step 1/1.</text>
</comment>
<comment type="similarity">
    <text evidence="1">Belongs to the UPRTase family.</text>
</comment>
<organism>
    <name type="scientific">Streptococcus thermophilus (strain CNRZ 1066)</name>
    <dbReference type="NCBI Taxonomy" id="299768"/>
    <lineage>
        <taxon>Bacteria</taxon>
        <taxon>Bacillati</taxon>
        <taxon>Bacillota</taxon>
        <taxon>Bacilli</taxon>
        <taxon>Lactobacillales</taxon>
        <taxon>Streptococcaceae</taxon>
        <taxon>Streptococcus</taxon>
    </lineage>
</organism>
<name>UPP_STRT1</name>
<evidence type="ECO:0000255" key="1">
    <source>
        <dbReference type="HAMAP-Rule" id="MF_01218"/>
    </source>
</evidence>
<sequence>MGKFQVISHPLIQHKLSILRREDTSTKDFRELVNEIAMLMGYEVSRDLPLEEVEIQTPIIKTVQKQLSGKKLAIVPILRAGIGMVDGFLSLVPAAKVGHIGMYRDEETLEPVEYLVKLPEDIDQRQIFVMDPMLATGGSAILAVDSLKKRGAANIKFVCLVAAPEGVKKLQDAHPDIDIYTASLDERLNENGYIVPGLGDAGDRLFGTK</sequence>
<keyword id="KW-0021">Allosteric enzyme</keyword>
<keyword id="KW-0328">Glycosyltransferase</keyword>
<keyword id="KW-0342">GTP-binding</keyword>
<keyword id="KW-0460">Magnesium</keyword>
<keyword id="KW-0547">Nucleotide-binding</keyword>
<keyword id="KW-0808">Transferase</keyword>
<accession>Q5M1A9</accession>
<reference key="1">
    <citation type="journal article" date="2004" name="Nat. Biotechnol.">
        <title>Complete sequence and comparative genome analysis of the dairy bacterium Streptococcus thermophilus.</title>
        <authorList>
            <person name="Bolotin A."/>
            <person name="Quinquis B."/>
            <person name="Renault P."/>
            <person name="Sorokin A."/>
            <person name="Ehrlich S.D."/>
            <person name="Kulakauskas S."/>
            <person name="Lapidus A."/>
            <person name="Goltsman E."/>
            <person name="Mazur M."/>
            <person name="Pusch G.D."/>
            <person name="Fonstein M."/>
            <person name="Overbeek R."/>
            <person name="Kyprides N."/>
            <person name="Purnelle B."/>
            <person name="Prozzi D."/>
            <person name="Ngui K."/>
            <person name="Masuy D."/>
            <person name="Hancy F."/>
            <person name="Burteau S."/>
            <person name="Boutry M."/>
            <person name="Delcour J."/>
            <person name="Goffeau A."/>
            <person name="Hols P."/>
        </authorList>
    </citation>
    <scope>NUCLEOTIDE SEQUENCE [LARGE SCALE GENOMIC DNA]</scope>
    <source>
        <strain>CNRZ 1066</strain>
    </source>
</reference>
<feature type="chain" id="PRO_1000053802" description="Uracil phosphoribosyltransferase">
    <location>
        <begin position="1"/>
        <end position="209"/>
    </location>
</feature>
<feature type="binding site" evidence="1">
    <location>
        <position position="79"/>
    </location>
    <ligand>
        <name>5-phospho-alpha-D-ribose 1-diphosphate</name>
        <dbReference type="ChEBI" id="CHEBI:58017"/>
    </ligand>
</feature>
<feature type="binding site" evidence="1">
    <location>
        <position position="104"/>
    </location>
    <ligand>
        <name>5-phospho-alpha-D-ribose 1-diphosphate</name>
        <dbReference type="ChEBI" id="CHEBI:58017"/>
    </ligand>
</feature>
<feature type="binding site" evidence="1">
    <location>
        <begin position="131"/>
        <end position="139"/>
    </location>
    <ligand>
        <name>5-phospho-alpha-D-ribose 1-diphosphate</name>
        <dbReference type="ChEBI" id="CHEBI:58017"/>
    </ligand>
</feature>
<feature type="binding site" evidence="1">
    <location>
        <position position="194"/>
    </location>
    <ligand>
        <name>uracil</name>
        <dbReference type="ChEBI" id="CHEBI:17568"/>
    </ligand>
</feature>
<feature type="binding site" evidence="1">
    <location>
        <begin position="199"/>
        <end position="201"/>
    </location>
    <ligand>
        <name>uracil</name>
        <dbReference type="ChEBI" id="CHEBI:17568"/>
    </ligand>
</feature>
<feature type="binding site" evidence="1">
    <location>
        <position position="200"/>
    </location>
    <ligand>
        <name>5-phospho-alpha-D-ribose 1-diphosphate</name>
        <dbReference type="ChEBI" id="CHEBI:58017"/>
    </ligand>
</feature>
<dbReference type="EC" id="2.4.2.9" evidence="1"/>
<dbReference type="EMBL" id="CP000024">
    <property type="protein sequence ID" value="AAV61958.1"/>
    <property type="molecule type" value="Genomic_DNA"/>
</dbReference>
<dbReference type="RefSeq" id="WP_002946740.1">
    <property type="nucleotide sequence ID" value="NC_006449.1"/>
</dbReference>
<dbReference type="SMR" id="Q5M1A9"/>
<dbReference type="GeneID" id="66898272"/>
<dbReference type="KEGG" id="stc:str0355"/>
<dbReference type="HOGENOM" id="CLU_067096_2_2_9"/>
<dbReference type="UniPathway" id="UPA00574">
    <property type="reaction ID" value="UER00636"/>
</dbReference>
<dbReference type="GO" id="GO:0005525">
    <property type="term" value="F:GTP binding"/>
    <property type="evidence" value="ECO:0007669"/>
    <property type="project" value="UniProtKB-KW"/>
</dbReference>
<dbReference type="GO" id="GO:0000287">
    <property type="term" value="F:magnesium ion binding"/>
    <property type="evidence" value="ECO:0007669"/>
    <property type="project" value="UniProtKB-UniRule"/>
</dbReference>
<dbReference type="GO" id="GO:0004845">
    <property type="term" value="F:uracil phosphoribosyltransferase activity"/>
    <property type="evidence" value="ECO:0007669"/>
    <property type="project" value="UniProtKB-UniRule"/>
</dbReference>
<dbReference type="GO" id="GO:0044206">
    <property type="term" value="P:UMP salvage"/>
    <property type="evidence" value="ECO:0007669"/>
    <property type="project" value="UniProtKB-UniRule"/>
</dbReference>
<dbReference type="GO" id="GO:0006223">
    <property type="term" value="P:uracil salvage"/>
    <property type="evidence" value="ECO:0007669"/>
    <property type="project" value="InterPro"/>
</dbReference>
<dbReference type="CDD" id="cd06223">
    <property type="entry name" value="PRTases_typeI"/>
    <property type="match status" value="1"/>
</dbReference>
<dbReference type="FunFam" id="3.40.50.2020:FF:000003">
    <property type="entry name" value="Uracil phosphoribosyltransferase"/>
    <property type="match status" value="1"/>
</dbReference>
<dbReference type="Gene3D" id="3.40.50.2020">
    <property type="match status" value="1"/>
</dbReference>
<dbReference type="HAMAP" id="MF_01218_B">
    <property type="entry name" value="Upp_B"/>
    <property type="match status" value="1"/>
</dbReference>
<dbReference type="InterPro" id="IPR000836">
    <property type="entry name" value="PRibTrfase_dom"/>
</dbReference>
<dbReference type="InterPro" id="IPR029057">
    <property type="entry name" value="PRTase-like"/>
</dbReference>
<dbReference type="InterPro" id="IPR034332">
    <property type="entry name" value="Upp_B"/>
</dbReference>
<dbReference type="InterPro" id="IPR050054">
    <property type="entry name" value="UPRTase/APRTase"/>
</dbReference>
<dbReference type="InterPro" id="IPR005765">
    <property type="entry name" value="Ura_phspho_trans"/>
</dbReference>
<dbReference type="NCBIfam" id="NF001097">
    <property type="entry name" value="PRK00129.1"/>
    <property type="match status" value="1"/>
</dbReference>
<dbReference type="NCBIfam" id="TIGR01091">
    <property type="entry name" value="upp"/>
    <property type="match status" value="1"/>
</dbReference>
<dbReference type="PANTHER" id="PTHR32315">
    <property type="entry name" value="ADENINE PHOSPHORIBOSYLTRANSFERASE"/>
    <property type="match status" value="1"/>
</dbReference>
<dbReference type="PANTHER" id="PTHR32315:SF4">
    <property type="entry name" value="URACIL PHOSPHORIBOSYLTRANSFERASE, CHLOROPLASTIC"/>
    <property type="match status" value="1"/>
</dbReference>
<dbReference type="Pfam" id="PF14681">
    <property type="entry name" value="UPRTase"/>
    <property type="match status" value="1"/>
</dbReference>
<dbReference type="SUPFAM" id="SSF53271">
    <property type="entry name" value="PRTase-like"/>
    <property type="match status" value="1"/>
</dbReference>